<keyword id="KW-0012">Acyltransferase</keyword>
<keyword id="KW-0028">Amino-acid biosynthesis</keyword>
<keyword id="KW-0220">Diaminopimelate biosynthesis</keyword>
<keyword id="KW-0457">Lysine biosynthesis</keyword>
<keyword id="KW-0677">Repeat</keyword>
<keyword id="KW-0808">Transferase</keyword>
<name>DAPH_STRT1</name>
<protein>
    <recommendedName>
        <fullName evidence="1">2,3,4,5-tetrahydropyridine-2,6-dicarboxylate N-acetyltransferase</fullName>
        <ecNumber evidence="1">2.3.1.89</ecNumber>
    </recommendedName>
    <alternativeName>
        <fullName evidence="1">Tetrahydrodipicolinate N-acetyltransferase</fullName>
        <shortName evidence="1">THP acetyltransferase</shortName>
        <shortName evidence="1">Tetrahydropicolinate acetylase</shortName>
    </alternativeName>
</protein>
<organism>
    <name type="scientific">Streptococcus thermophilus (strain CNRZ 1066)</name>
    <dbReference type="NCBI Taxonomy" id="299768"/>
    <lineage>
        <taxon>Bacteria</taxon>
        <taxon>Bacillati</taxon>
        <taxon>Bacillota</taxon>
        <taxon>Bacilli</taxon>
        <taxon>Lactobacillales</taxon>
        <taxon>Streptococcaceae</taxon>
        <taxon>Streptococcus</taxon>
    </lineage>
</organism>
<proteinExistence type="inferred from homology"/>
<feature type="chain" id="PRO_0000376721" description="2,3,4,5-tetrahydropyridine-2,6-dicarboxylate N-acetyltransferase">
    <location>
        <begin position="1"/>
        <end position="232"/>
    </location>
</feature>
<dbReference type="EC" id="2.3.1.89" evidence="1"/>
<dbReference type="EMBL" id="CP000024">
    <property type="protein sequence ID" value="AAV63353.1"/>
    <property type="molecule type" value="Genomic_DNA"/>
</dbReference>
<dbReference type="SMR" id="Q5LXY2"/>
<dbReference type="KEGG" id="stc:str1839"/>
<dbReference type="HOGENOM" id="CLU_103751_0_0_9"/>
<dbReference type="UniPathway" id="UPA00034">
    <property type="reaction ID" value="UER00022"/>
</dbReference>
<dbReference type="GO" id="GO:0047200">
    <property type="term" value="F:tetrahydrodipicolinate N-acetyltransferase activity"/>
    <property type="evidence" value="ECO:0007669"/>
    <property type="project" value="UniProtKB-EC"/>
</dbReference>
<dbReference type="GO" id="GO:0019877">
    <property type="term" value="P:diaminopimelate biosynthetic process"/>
    <property type="evidence" value="ECO:0007669"/>
    <property type="project" value="UniProtKB-UniRule"/>
</dbReference>
<dbReference type="GO" id="GO:0009089">
    <property type="term" value="P:lysine biosynthetic process via diaminopimelate"/>
    <property type="evidence" value="ECO:0007669"/>
    <property type="project" value="UniProtKB-UniRule"/>
</dbReference>
<dbReference type="Gene3D" id="2.160.10.10">
    <property type="entry name" value="Hexapeptide repeat proteins"/>
    <property type="match status" value="1"/>
</dbReference>
<dbReference type="Gene3D" id="3.30.70.250">
    <property type="entry name" value="Malonyl-CoA ACP transacylase, ACP-binding"/>
    <property type="match status" value="1"/>
</dbReference>
<dbReference type="HAMAP" id="MF_01691">
    <property type="entry name" value="DapH"/>
    <property type="match status" value="1"/>
</dbReference>
<dbReference type="InterPro" id="IPR019873">
    <property type="entry name" value="DapH"/>
</dbReference>
<dbReference type="InterPro" id="IPR013710">
    <property type="entry name" value="DapH_N"/>
</dbReference>
<dbReference type="InterPro" id="IPR001451">
    <property type="entry name" value="Hexapep"/>
</dbReference>
<dbReference type="InterPro" id="IPR018357">
    <property type="entry name" value="Hexapep_transf_CS"/>
</dbReference>
<dbReference type="InterPro" id="IPR050179">
    <property type="entry name" value="Trans_hexapeptide_repeat"/>
</dbReference>
<dbReference type="InterPro" id="IPR011004">
    <property type="entry name" value="Trimer_LpxA-like_sf"/>
</dbReference>
<dbReference type="NCBIfam" id="TIGR03532">
    <property type="entry name" value="DapD_Ac"/>
    <property type="match status" value="1"/>
</dbReference>
<dbReference type="PANTHER" id="PTHR43300:SF10">
    <property type="entry name" value="2,3,4,5-TETRAHYDROPYRIDINE-2,6-DICARBOXYLATE N-ACETYLTRANSFERASE"/>
    <property type="match status" value="1"/>
</dbReference>
<dbReference type="PANTHER" id="PTHR43300">
    <property type="entry name" value="ACETYLTRANSFERASE"/>
    <property type="match status" value="1"/>
</dbReference>
<dbReference type="Pfam" id="PF08503">
    <property type="entry name" value="DapH_N"/>
    <property type="match status" value="1"/>
</dbReference>
<dbReference type="Pfam" id="PF00132">
    <property type="entry name" value="Hexapep"/>
    <property type="match status" value="1"/>
</dbReference>
<dbReference type="Pfam" id="PF14602">
    <property type="entry name" value="Hexapep_2"/>
    <property type="match status" value="1"/>
</dbReference>
<dbReference type="SUPFAM" id="SSF51161">
    <property type="entry name" value="Trimeric LpxA-like enzymes"/>
    <property type="match status" value="1"/>
</dbReference>
<dbReference type="PROSITE" id="PS00101">
    <property type="entry name" value="HEXAPEP_TRANSFERASES"/>
    <property type="match status" value="2"/>
</dbReference>
<reference key="1">
    <citation type="journal article" date="2004" name="Nat. Biotechnol.">
        <title>Complete sequence and comparative genome analysis of the dairy bacterium Streptococcus thermophilus.</title>
        <authorList>
            <person name="Bolotin A."/>
            <person name="Quinquis B."/>
            <person name="Renault P."/>
            <person name="Sorokin A."/>
            <person name="Ehrlich S.D."/>
            <person name="Kulakauskas S."/>
            <person name="Lapidus A."/>
            <person name="Goltsman E."/>
            <person name="Mazur M."/>
            <person name="Pusch G.D."/>
            <person name="Fonstein M."/>
            <person name="Overbeek R."/>
            <person name="Kyprides N."/>
            <person name="Purnelle B."/>
            <person name="Prozzi D."/>
            <person name="Ngui K."/>
            <person name="Masuy D."/>
            <person name="Hancy F."/>
            <person name="Burteau S."/>
            <person name="Boutry M."/>
            <person name="Delcour J."/>
            <person name="Goffeau A."/>
            <person name="Hols P."/>
        </authorList>
    </citation>
    <scope>NUCLEOTIDE SEQUENCE [LARGE SCALE GENOMIC DNA]</scope>
    <source>
        <strain>CNRZ 1066</strain>
    </source>
</reference>
<evidence type="ECO:0000255" key="1">
    <source>
        <dbReference type="HAMAP-Rule" id="MF_01691"/>
    </source>
</evidence>
<sequence length="232" mass="24120">MTAQKMSAQEIIAFIGNAEKKTNVKVTFEGELATAVPSSVTKLGNVLFGDWKDIEPLLANLTENKDYVVEQDGRNSAVPLLDKRHLNARIEPGAIIRDQVTIEDNAVVMMGAVINIGAEIGAGTMIDMGAILGGRATVGKNSHIGAGAVLAGVIEPASAEPVRIGDNVLVGANAVVIEGVQVGNGSVVAAGAIVTQDVPENVVVAGVPARIIKEIDEKTQQKTALEDALRNL</sequence>
<comment type="function">
    <text evidence="1">Catalyzes the transfer of an acetyl group from acetyl-CoA to tetrahydrodipicolinate.</text>
</comment>
<comment type="catalytic activity">
    <reaction evidence="1">
        <text>(S)-2,3,4,5-tetrahydrodipicolinate + acetyl-CoA + H2O = L-2-acetamido-6-oxoheptanedioate + CoA</text>
        <dbReference type="Rhea" id="RHEA:13085"/>
        <dbReference type="ChEBI" id="CHEBI:15377"/>
        <dbReference type="ChEBI" id="CHEBI:16845"/>
        <dbReference type="ChEBI" id="CHEBI:57287"/>
        <dbReference type="ChEBI" id="CHEBI:57288"/>
        <dbReference type="ChEBI" id="CHEBI:58117"/>
        <dbReference type="EC" id="2.3.1.89"/>
    </reaction>
</comment>
<comment type="pathway">
    <text evidence="1">Amino-acid biosynthesis; L-lysine biosynthesis via DAP pathway; LL-2,6-diaminopimelate from (S)-tetrahydrodipicolinate (acetylase route): step 1/3.</text>
</comment>
<comment type="similarity">
    <text evidence="1">Belongs to the transferase hexapeptide repeat family. DapH subfamily.</text>
</comment>
<accession>Q5LXY2</accession>
<gene>
    <name evidence="1" type="primary">dapH</name>
    <name type="ordered locus">str1839</name>
</gene>